<comment type="function">
    <molecule>Neurosecretory protein VGF</molecule>
    <text evidence="3">Secreted polyprotein that is packaged and proteolytically processed by prohormone convertases PCSK1 and PCSK2 in a cell-type-specific manner (By similarity). VGF and peptides derived from its processing play many roles in neurogenesis and neuroplasticity associated with learning, memory, depression and chronic pain (By similarity).</text>
</comment>
<comment type="function">
    <molecule>Neuroendocrine regulatory peptide-1</molecule>
    <text evidence="3">Plays a role in the control of body fluid homeostasis by regulating vasopressin release. Suppresses presynaptic glutamatergic neurons connected to vasopressin neurons.</text>
</comment>
<comment type="function">
    <molecule>Neuroendocrine regulatory peptide-2</molecule>
    <text evidence="3">Plays a role in the control of body fluid homeostasis by regulating vasopressin release. Activates GABAergic interneurons which are inhibitory neurons of the nervous system and thereby suppresses presynaptic glutamatergic neurons (By similarity). Also stimulates feeding behavior in an orexin-dependent manner in the hypothalamus (By similarity). Functions as a positive regulator for the activation of orexin neurons resulting in elevated gastric acid secretion and gastric emptying (By similarity).</text>
</comment>
<comment type="subcellular location">
    <molecule>Neurosecretory protein VGF</molecule>
    <subcellularLocation>
        <location evidence="2">Secreted</location>
    </subcellularLocation>
    <subcellularLocation>
        <location evidence="2">Cytoplasmic vesicle</location>
        <location evidence="2">Secretory vesicle</location>
    </subcellularLocation>
    <text evidence="2">Stored in secretory vesicles and then secreted, NERP peptides colocalize with vasopressin in the storage granules of hypothalamus.</text>
</comment>
<comment type="PTM">
    <text evidence="1">Multiple peptides are derived from VGF, with activities in synaptic plasticity, antidepression, penile erection, autonomic activation, and increases in energy expenditure.</text>
</comment>
<comment type="mass spectrometry" mass="3706.5" method="Electrospray" evidence="7">
    <molecule>Peptide V</molecule>
</comment>
<feature type="signal peptide" evidence="4">
    <location>
        <begin position="1"/>
        <end position="23"/>
    </location>
</feature>
<feature type="chain" id="PRO_0000391696" description="Neurosecretory protein VGF">
    <location>
        <begin position="24"/>
        <end position="618"/>
    </location>
</feature>
<feature type="peptide" id="PRO_0000403375" description="Neuroendocrine regulatory peptide-1" evidence="1">
    <location>
        <begin position="282"/>
        <end position="306"/>
    </location>
</feature>
<feature type="peptide" id="PRO_0000403376" description="Neuroendocrine regulatory peptide-2" evidence="1">
    <location>
        <begin position="310"/>
        <end position="347"/>
    </location>
</feature>
<feature type="peptide" id="PRO_0000391697" description="Peptide V">
    <location>
        <begin position="589"/>
        <end position="618"/>
    </location>
</feature>
<feature type="region of interest" description="Disordered" evidence="5">
    <location>
        <begin position="23"/>
        <end position="46"/>
    </location>
</feature>
<feature type="region of interest" description="Disordered" evidence="5">
    <location>
        <begin position="86"/>
        <end position="201"/>
    </location>
</feature>
<feature type="region of interest" description="Disordered" evidence="5">
    <location>
        <begin position="219"/>
        <end position="262"/>
    </location>
</feature>
<feature type="region of interest" description="Disordered" evidence="5">
    <location>
        <begin position="342"/>
        <end position="603"/>
    </location>
</feature>
<feature type="coiled-coil region" evidence="4">
    <location>
        <begin position="301"/>
        <end position="332"/>
    </location>
</feature>
<feature type="compositionally biased region" description="Pro residues" evidence="5">
    <location>
        <begin position="26"/>
        <end position="37"/>
    </location>
</feature>
<feature type="compositionally biased region" description="Low complexity" evidence="5">
    <location>
        <begin position="180"/>
        <end position="195"/>
    </location>
</feature>
<feature type="compositionally biased region" description="Basic and acidic residues" evidence="5">
    <location>
        <begin position="356"/>
        <end position="378"/>
    </location>
</feature>
<feature type="compositionally biased region" description="Acidic residues" evidence="5">
    <location>
        <begin position="379"/>
        <end position="395"/>
    </location>
</feature>
<feature type="compositionally biased region" description="Basic and acidic residues" evidence="5">
    <location>
        <begin position="416"/>
        <end position="434"/>
    </location>
</feature>
<feature type="compositionally biased region" description="Acidic residues" evidence="5">
    <location>
        <begin position="435"/>
        <end position="451"/>
    </location>
</feature>
<feature type="compositionally biased region" description="Pro residues" evidence="5">
    <location>
        <begin position="490"/>
        <end position="500"/>
    </location>
</feature>
<feature type="compositionally biased region" description="Basic and acidic residues" evidence="5">
    <location>
        <begin position="578"/>
        <end position="602"/>
    </location>
</feature>
<feature type="modified residue" description="Pyrrolidone carboxylic acid" evidence="2">
    <location>
        <position position="310"/>
    </location>
</feature>
<feature type="modified residue" description="Phosphoserine" evidence="2">
    <location>
        <position position="421"/>
    </location>
</feature>
<feature type="modified residue" description="Phosphothreonine" evidence="2">
    <location>
        <position position="425"/>
    </location>
</feature>
<feature type="sequence conflict" description="In Ref. 2; DV909837." evidence="9" ref="2">
    <original>R</original>
    <variation>Q</variation>
    <location>
        <position position="422"/>
    </location>
</feature>
<feature type="sequence conflict" description="In Ref. 3; CO873651." evidence="9" ref="3">
    <original>V</original>
    <variation>E</variation>
    <location>
        <position position="494"/>
    </location>
</feature>
<feature type="sequence conflict" description="In Ref. 3; CO873651." evidence="9" ref="3">
    <original>A</original>
    <variation>K</variation>
    <location>
        <position position="586"/>
    </location>
</feature>
<feature type="sequence conflict" description="In Ref. 3; CO873651." evidence="9" ref="3">
    <original>V</original>
    <variation>G</variation>
    <location>
        <position position="613"/>
    </location>
</feature>
<feature type="sequence conflict" description="In Ref. 3; CO873651." evidence="9" ref="3">
    <original>R</original>
    <variation>G</variation>
    <location>
        <position position="617"/>
    </location>
</feature>
<protein>
    <recommendedName>
        <fullName evidence="3">Neurosecretory protein VGF</fullName>
    </recommendedName>
    <component>
        <recommendedName>
            <fullName evidence="8">Peptide V</fullName>
        </recommendedName>
        <alternativeName>
            <fullName>AQEE-30</fullName>
        </alternativeName>
        <alternativeName>
            <fullName evidence="8">VGF-derived peptide</fullName>
        </alternativeName>
    </component>
    <component>
        <recommendedName>
            <fullName>Neuroendocrine regulatory peptide-1</fullName>
            <shortName>NERP-1</shortName>
        </recommendedName>
    </component>
    <component>
        <recommendedName>
            <fullName>Neuroendocrine regulatory peptide-2</fullName>
            <shortName>NERP-2</shortName>
        </recommendedName>
    </component>
</protein>
<dbReference type="EMBL" id="AAFC03118060">
    <property type="status" value="NOT_ANNOTATED_CDS"/>
    <property type="molecule type" value="Genomic_DNA"/>
</dbReference>
<dbReference type="EMBL" id="AAFC03131609">
    <property type="status" value="NOT_ANNOTATED_CDS"/>
    <property type="molecule type" value="Genomic_DNA"/>
</dbReference>
<dbReference type="EMBL" id="DV909837">
    <property type="status" value="NOT_ANNOTATED_CDS"/>
    <property type="molecule type" value="mRNA"/>
</dbReference>
<dbReference type="EMBL" id="CO873651">
    <property type="status" value="NOT_ANNOTATED_CDS"/>
    <property type="molecule type" value="mRNA"/>
</dbReference>
<dbReference type="FunCoup" id="P86435">
    <property type="interactions" value="299"/>
</dbReference>
<dbReference type="STRING" id="9913.ENSBTAP00000013014"/>
<dbReference type="PaxDb" id="9913-ENSBTAP00000013014"/>
<dbReference type="PeptideAtlas" id="P86435"/>
<dbReference type="eggNOG" id="ENOG502S5N4">
    <property type="taxonomic scope" value="Eukaryota"/>
</dbReference>
<dbReference type="InParanoid" id="P86435"/>
<dbReference type="OrthoDB" id="8926660at2759"/>
<dbReference type="Proteomes" id="UP000009136">
    <property type="component" value="Unplaced"/>
</dbReference>
<dbReference type="GO" id="GO:0005615">
    <property type="term" value="C:extracellular space"/>
    <property type="evidence" value="ECO:0000318"/>
    <property type="project" value="GO_Central"/>
</dbReference>
<dbReference type="GO" id="GO:0030133">
    <property type="term" value="C:transport vesicle"/>
    <property type="evidence" value="ECO:0007669"/>
    <property type="project" value="UniProtKB-SubCell"/>
</dbReference>
<dbReference type="GO" id="GO:0008083">
    <property type="term" value="F:growth factor activity"/>
    <property type="evidence" value="ECO:0007669"/>
    <property type="project" value="UniProtKB-KW"/>
</dbReference>
<dbReference type="GO" id="GO:0005179">
    <property type="term" value="F:hormone activity"/>
    <property type="evidence" value="ECO:0000318"/>
    <property type="project" value="GO_Central"/>
</dbReference>
<dbReference type="GO" id="GO:0005184">
    <property type="term" value="F:neuropeptide hormone activity"/>
    <property type="evidence" value="ECO:0007669"/>
    <property type="project" value="InterPro"/>
</dbReference>
<dbReference type="GO" id="GO:0033500">
    <property type="term" value="P:carbohydrate homeostasis"/>
    <property type="evidence" value="ECO:0000318"/>
    <property type="project" value="GO_Central"/>
</dbReference>
<dbReference type="GO" id="GO:0048167">
    <property type="term" value="P:regulation of synaptic plasticity"/>
    <property type="evidence" value="ECO:0000318"/>
    <property type="project" value="GO_Central"/>
</dbReference>
<dbReference type="InterPro" id="IPR026128">
    <property type="entry name" value="VGF"/>
</dbReference>
<dbReference type="PANTHER" id="PTHR15159">
    <property type="entry name" value="NEUROSECRETORY PROTEIN VGF"/>
    <property type="match status" value="1"/>
</dbReference>
<dbReference type="PANTHER" id="PTHR15159:SF2">
    <property type="entry name" value="NEUROSECRETORY PROTEIN VGF"/>
    <property type="match status" value="1"/>
</dbReference>
<name>VGF_BOVIN</name>
<evidence type="ECO:0000250" key="1"/>
<evidence type="ECO:0000250" key="2">
    <source>
        <dbReference type="UniProtKB" id="O15240"/>
    </source>
</evidence>
<evidence type="ECO:0000250" key="3">
    <source>
        <dbReference type="UniProtKB" id="P20156"/>
    </source>
</evidence>
<evidence type="ECO:0000255" key="4"/>
<evidence type="ECO:0000256" key="5">
    <source>
        <dbReference type="SAM" id="MobiDB-lite"/>
    </source>
</evidence>
<evidence type="ECO:0000269" key="6">
    <source>
    </source>
</evidence>
<evidence type="ECO:0000269" key="7">
    <source>
    </source>
</evidence>
<evidence type="ECO:0000303" key="8">
    <source>
    </source>
</evidence>
<evidence type="ECO:0000305" key="9"/>
<organism>
    <name type="scientific">Bos taurus</name>
    <name type="common">Bovine</name>
    <dbReference type="NCBI Taxonomy" id="9913"/>
    <lineage>
        <taxon>Eukaryota</taxon>
        <taxon>Metazoa</taxon>
        <taxon>Chordata</taxon>
        <taxon>Craniata</taxon>
        <taxon>Vertebrata</taxon>
        <taxon>Euteleostomi</taxon>
        <taxon>Mammalia</taxon>
        <taxon>Eutheria</taxon>
        <taxon>Laurasiatheria</taxon>
        <taxon>Artiodactyla</taxon>
        <taxon>Ruminantia</taxon>
        <taxon>Pecora</taxon>
        <taxon>Bovidae</taxon>
        <taxon>Bovinae</taxon>
        <taxon>Bos</taxon>
    </lineage>
</organism>
<gene>
    <name evidence="3" type="primary">VGF</name>
</gene>
<keyword id="KW-0027">Amidation</keyword>
<keyword id="KW-0165">Cleavage on pair of basic residues</keyword>
<keyword id="KW-0175">Coiled coil</keyword>
<keyword id="KW-0968">Cytoplasmic vesicle</keyword>
<keyword id="KW-0903">Direct protein sequencing</keyword>
<keyword id="KW-0339">Growth factor</keyword>
<keyword id="KW-0597">Phosphoprotein</keyword>
<keyword id="KW-0873">Pyrrolidone carboxylic acid</keyword>
<keyword id="KW-1185">Reference proteome</keyword>
<keyword id="KW-0964">Secreted</keyword>
<keyword id="KW-0732">Signal</keyword>
<reference evidence="9" key="1">
    <citation type="journal article" date="2009" name="Science">
        <title>The genome sequence of taurine cattle: a window to ruminant biology and evolution.</title>
        <authorList>
            <consortium name="The bovine genome sequencing and analysis consortium"/>
        </authorList>
    </citation>
    <scope>NUCLEOTIDE SEQUENCE [LARGE SCALE GENOMIC DNA]</scope>
    <source>
        <strain evidence="6">Hereford</strain>
    </source>
</reference>
<reference evidence="9" key="2">
    <citation type="submission" date="2005-12" db="EMBL/GenBank/DDBJ databases">
        <authorList>
            <consortium name="NIH - Mammalian Gene Collection (MGC) project"/>
        </authorList>
    </citation>
    <scope>NUCLEOTIDE SEQUENCE [LARGE SCALE MRNA] OF 390-502</scope>
    <source>
        <strain>Hereford</strain>
        <tissue>Brain cortex</tissue>
    </source>
</reference>
<reference key="3">
    <citation type="journal article" date="2006" name="BMC Genomics">
        <title>A second generation radiation hybrid map to aid the assembly of the bovine genome sequence.</title>
        <authorList>
            <person name="Jann O.C."/>
            <person name="Aerts J."/>
            <person name="Jones M."/>
            <person name="Hastings N."/>
            <person name="Law A."/>
            <person name="McKay S."/>
            <person name="Marques E."/>
            <person name="Prasad A."/>
            <person name="Yu J."/>
            <person name="Moore S.S."/>
            <person name="Floriot S."/>
            <person name="Mahe M.F."/>
            <person name="Eggen A."/>
            <person name="Silveri L."/>
            <person name="Negrini R."/>
            <person name="Milanesi E."/>
            <person name="Ajmone-Marsan P."/>
            <person name="Valentini A."/>
            <person name="Marchitelli C."/>
            <person name="Savarese M.C."/>
            <person name="Janitz M."/>
            <person name="Herwig R."/>
            <person name="Hennig S."/>
            <person name="Gorni C."/>
            <person name="Connor E.E."/>
            <person name="Sonstegard T.S."/>
            <person name="Smith T."/>
            <person name="Drogemuller C."/>
            <person name="Williams J.L."/>
        </authorList>
    </citation>
    <scope>NUCLEOTIDE SEQUENCE [LARGE SCALE MRNA] OF 481-618</scope>
    <source>
        <strain>Hereford</strain>
        <tissue>Brain</tissue>
    </source>
</reference>
<reference evidence="9" key="4">
    <citation type="journal article" date="1994" name="Endocrinology">
        <title>Peptide V: a VGF-derived neuropeptide purified from bovine posterior pituitary.</title>
        <authorList>
            <person name="Liu J.W."/>
            <person name="Andrews P.C."/>
            <person name="Mershon J.L."/>
            <person name="Yan C."/>
            <person name="Allen D.L."/>
            <person name="Ben-Jonathan N."/>
        </authorList>
    </citation>
    <scope>PROTEIN SEQUENCE OF 589-618</scope>
    <scope>MASS SPECTROMETRY</scope>
    <source>
        <tissue evidence="7">Pituitary</tissue>
    </source>
</reference>
<reference evidence="9" key="5">
    <citation type="submission" date="2009-12" db="UniProtKB">
        <title>Neuropeptidomics of the bovine hypothalamus.</title>
        <authorList>
            <person name="Colgrave M.L."/>
            <person name="Xi L."/>
            <person name="Lehnert S."/>
            <person name="Wijffels G."/>
        </authorList>
    </citation>
    <scope>IDENTIFICATION BY MASS SPECTROMETRY</scope>
</reference>
<accession>P86435</accession>
<sequence length="618" mass="67620">MKSLRLPATVLFCLLLLIKGLGAAPPGHPEAQPPPPSSEHKEPVAGDAVLGSKDVSALEVRAARNSEPQDEGELFQGVDPRALAAVLLQALDRPASPPAPGGSQQRPEEETAESLLTETVRSQTHSLPVPETQAPAAPPRPQTQENGAEAPDPSEELEALASLLQELRDFSPSSAKRQQETAAAETETRTHTLTRVNLESPGPERVWRASWGEFQARVPERAPLPPPAPPQFQARVPESGPLPEAHQFGGGSSPKTHLGEALAPLSKAYQGLAAPFPKARRPETSLLGGTEAGERLLQQGLAQVEAGRRQAEATRQAAAQEERLADLASDLLLQYLLQGGARQRGLGGRGLQEEEGGGRETARQQEEAEQERRGGEERVGEEDEEAAEAEAEAEEAERARQNALLFAEEEEGEAGAEDKRSREETPGHRRKEAEGAEEGGAEDEDDDEEMDPQTIDSLIELSTKLHLPADDVVSIIEEVEEKRKRKKNAPPEPVPPPRAAPAPTHARSPKTPPPAPAPDREELPDGNEELPPRDRXENEVFSPVPYHPFPNYIRARTVQPPPASRRRHYHHALPPSRHYPDREAQARRAQEEAEAEERRLQEQEELENYIEHVLLRRP</sequence>
<proteinExistence type="evidence at protein level"/>